<gene>
    <name evidence="1" type="primary">khpA</name>
    <name type="ordered locus">OB1533</name>
</gene>
<protein>
    <recommendedName>
        <fullName evidence="1">RNA-binding protein KhpA</fullName>
    </recommendedName>
    <alternativeName>
        <fullName evidence="1">KH-domain protein A</fullName>
    </alternativeName>
</protein>
<dbReference type="EMBL" id="BA000028">
    <property type="protein sequence ID" value="BAC13489.1"/>
    <property type="molecule type" value="Genomic_DNA"/>
</dbReference>
<dbReference type="RefSeq" id="WP_011065933.1">
    <property type="nucleotide sequence ID" value="NC_004193.1"/>
</dbReference>
<dbReference type="SMR" id="Q8ER00"/>
<dbReference type="STRING" id="221109.gene:10733773"/>
<dbReference type="KEGG" id="oih:OB1533"/>
<dbReference type="eggNOG" id="COG1837">
    <property type="taxonomic scope" value="Bacteria"/>
</dbReference>
<dbReference type="HOGENOM" id="CLU_132074_1_0_9"/>
<dbReference type="OrthoDB" id="9812389at2"/>
<dbReference type="PhylomeDB" id="Q8ER00"/>
<dbReference type="Proteomes" id="UP000000822">
    <property type="component" value="Chromosome"/>
</dbReference>
<dbReference type="GO" id="GO:0005737">
    <property type="term" value="C:cytoplasm"/>
    <property type="evidence" value="ECO:0007669"/>
    <property type="project" value="UniProtKB-SubCell"/>
</dbReference>
<dbReference type="GO" id="GO:0003723">
    <property type="term" value="F:RNA binding"/>
    <property type="evidence" value="ECO:0007669"/>
    <property type="project" value="UniProtKB-UniRule"/>
</dbReference>
<dbReference type="GO" id="GO:0071555">
    <property type="term" value="P:cell wall organization"/>
    <property type="evidence" value="ECO:0007669"/>
    <property type="project" value="UniProtKB-KW"/>
</dbReference>
<dbReference type="GO" id="GO:0009252">
    <property type="term" value="P:peptidoglycan biosynthetic process"/>
    <property type="evidence" value="ECO:0007669"/>
    <property type="project" value="UniProtKB-UniRule"/>
</dbReference>
<dbReference type="GO" id="GO:0008360">
    <property type="term" value="P:regulation of cell shape"/>
    <property type="evidence" value="ECO:0007669"/>
    <property type="project" value="UniProtKB-KW"/>
</dbReference>
<dbReference type="CDD" id="cd22533">
    <property type="entry name" value="KH-II_YlqC-like"/>
    <property type="match status" value="1"/>
</dbReference>
<dbReference type="Gene3D" id="3.30.300.20">
    <property type="match status" value="1"/>
</dbReference>
<dbReference type="HAMAP" id="MF_00088">
    <property type="entry name" value="KhpA"/>
    <property type="match status" value="1"/>
</dbReference>
<dbReference type="InterPro" id="IPR015946">
    <property type="entry name" value="KH_dom-like_a/b"/>
</dbReference>
<dbReference type="InterPro" id="IPR009019">
    <property type="entry name" value="KH_sf_prok-type"/>
</dbReference>
<dbReference type="InterPro" id="IPR020627">
    <property type="entry name" value="KhpA"/>
</dbReference>
<dbReference type="PANTHER" id="PTHR34654:SF1">
    <property type="entry name" value="RNA-BINDING PROTEIN KHPA"/>
    <property type="match status" value="1"/>
</dbReference>
<dbReference type="PANTHER" id="PTHR34654">
    <property type="entry name" value="UPF0109 PROTEIN SCO5592"/>
    <property type="match status" value="1"/>
</dbReference>
<dbReference type="Pfam" id="PF13083">
    <property type="entry name" value="KH_KhpA-B"/>
    <property type="match status" value="1"/>
</dbReference>
<dbReference type="SUPFAM" id="SSF54814">
    <property type="entry name" value="Prokaryotic type KH domain (KH-domain type II)"/>
    <property type="match status" value="1"/>
</dbReference>
<keyword id="KW-0133">Cell shape</keyword>
<keyword id="KW-0961">Cell wall biogenesis/degradation</keyword>
<keyword id="KW-0143">Chaperone</keyword>
<keyword id="KW-0963">Cytoplasm</keyword>
<keyword id="KW-1185">Reference proteome</keyword>
<keyword id="KW-0694">RNA-binding</keyword>
<evidence type="ECO:0000255" key="1">
    <source>
        <dbReference type="HAMAP-Rule" id="MF_00088"/>
    </source>
</evidence>
<accession>Q8ER00</accession>
<sequence>MKALIESIVASLVDYPEEIVINKTEEESKVVYHLTVHPDDVGKVIGKNGRIAKAIRTVVYASKTDGNKRIYLDIM</sequence>
<name>KHPA_OCEIH</name>
<organism>
    <name type="scientific">Oceanobacillus iheyensis (strain DSM 14371 / CIP 107618 / JCM 11309 / KCTC 3954 / HTE831)</name>
    <dbReference type="NCBI Taxonomy" id="221109"/>
    <lineage>
        <taxon>Bacteria</taxon>
        <taxon>Bacillati</taxon>
        <taxon>Bacillota</taxon>
        <taxon>Bacilli</taxon>
        <taxon>Bacillales</taxon>
        <taxon>Bacillaceae</taxon>
        <taxon>Oceanobacillus</taxon>
    </lineage>
</organism>
<feature type="chain" id="PRO_0000163233" description="RNA-binding protein KhpA">
    <location>
        <begin position="1"/>
        <end position="75"/>
    </location>
</feature>
<feature type="domain" description="KH" evidence="1">
    <location>
        <begin position="29"/>
        <end position="75"/>
    </location>
</feature>
<comment type="function">
    <text evidence="1">A probable RNA chaperone. Forms a complex with KhpB which binds to cellular RNA and controls its expression. Plays a role in peptidoglycan (PG) homeostasis and cell length regulation.</text>
</comment>
<comment type="subunit">
    <text evidence="1">Forms a complex with KhpB.</text>
</comment>
<comment type="subcellular location">
    <subcellularLocation>
        <location evidence="1">Cytoplasm</location>
    </subcellularLocation>
</comment>
<comment type="similarity">
    <text evidence="1">Belongs to the KhpA RNA-binding protein family.</text>
</comment>
<proteinExistence type="inferred from homology"/>
<reference key="1">
    <citation type="journal article" date="2002" name="Nucleic Acids Res.">
        <title>Genome sequence of Oceanobacillus iheyensis isolated from the Iheya Ridge and its unexpected adaptive capabilities to extreme environments.</title>
        <authorList>
            <person name="Takami H."/>
            <person name="Takaki Y."/>
            <person name="Uchiyama I."/>
        </authorList>
    </citation>
    <scope>NUCLEOTIDE SEQUENCE [LARGE SCALE GENOMIC DNA]</scope>
    <source>
        <strain>DSM 14371 / CIP 107618 / JCM 11309 / KCTC 3954 / HTE831</strain>
    </source>
</reference>